<sequence length="203" mass="23078">MELDFDKMNGLVPAIIQDNETRKVLMLGFMNKEAYDKTVETGKVTFFSRTKNRLWTKGEESGNFLHVVSIKADCDNDTLLIQADPAGPVCHTGTDTCWGEKNEEPVMFLKALQDFIDKRHEEMPQGSYTTSLFESGINKIAQKVGEEAVETVIEATNGTNERLIYEGADLIYHMIVLLTSKGYRIEDLARELQERHSSTWKKH</sequence>
<protein>
    <recommendedName>
        <fullName evidence="1">Histidine biosynthesis bifunctional protein HisIE</fullName>
    </recommendedName>
    <domain>
        <recommendedName>
            <fullName evidence="1">Phosphoribosyl-AMP cyclohydrolase</fullName>
            <shortName evidence="1">PRA-CH</shortName>
            <ecNumber evidence="1">3.5.4.19</ecNumber>
        </recommendedName>
    </domain>
    <domain>
        <recommendedName>
            <fullName evidence="1">Phosphoribosyl-ATP pyrophosphatase</fullName>
            <shortName evidence="1">PRA-PH</shortName>
            <ecNumber evidence="1">3.6.1.31</ecNumber>
        </recommendedName>
    </domain>
</protein>
<keyword id="KW-0028">Amino-acid biosynthesis</keyword>
<keyword id="KW-0067">ATP-binding</keyword>
<keyword id="KW-0963">Cytoplasm</keyword>
<keyword id="KW-0368">Histidine biosynthesis</keyword>
<keyword id="KW-0378">Hydrolase</keyword>
<keyword id="KW-0511">Multifunctional enzyme</keyword>
<keyword id="KW-0547">Nucleotide-binding</keyword>
<keyword id="KW-1185">Reference proteome</keyword>
<dbReference type="EC" id="3.5.4.19" evidence="1"/>
<dbReference type="EC" id="3.6.1.31" evidence="1"/>
<dbReference type="EMBL" id="AE015928">
    <property type="protein sequence ID" value="AAO76484.1"/>
    <property type="molecule type" value="Genomic_DNA"/>
</dbReference>
<dbReference type="RefSeq" id="NP_810290.1">
    <property type="nucleotide sequence ID" value="NC_004663.1"/>
</dbReference>
<dbReference type="RefSeq" id="WP_008762399.1">
    <property type="nucleotide sequence ID" value="NZ_UYXG01000037.1"/>
</dbReference>
<dbReference type="SMR" id="Q8A7Z7"/>
<dbReference type="FunCoup" id="Q8A7Z7">
    <property type="interactions" value="286"/>
</dbReference>
<dbReference type="STRING" id="226186.BT_1377"/>
<dbReference type="PaxDb" id="226186-BT_1377"/>
<dbReference type="EnsemblBacteria" id="AAO76484">
    <property type="protein sequence ID" value="AAO76484"/>
    <property type="gene ID" value="BT_1377"/>
</dbReference>
<dbReference type="GeneID" id="60927358"/>
<dbReference type="KEGG" id="bth:BT_1377"/>
<dbReference type="PATRIC" id="fig|226186.12.peg.1412"/>
<dbReference type="eggNOG" id="COG0139">
    <property type="taxonomic scope" value="Bacteria"/>
</dbReference>
<dbReference type="eggNOG" id="COG0140">
    <property type="taxonomic scope" value="Bacteria"/>
</dbReference>
<dbReference type="HOGENOM" id="CLU_048577_3_1_10"/>
<dbReference type="InParanoid" id="Q8A7Z7"/>
<dbReference type="OrthoDB" id="9795769at2"/>
<dbReference type="UniPathway" id="UPA00031">
    <property type="reaction ID" value="UER00007"/>
</dbReference>
<dbReference type="UniPathway" id="UPA00031">
    <property type="reaction ID" value="UER00008"/>
</dbReference>
<dbReference type="Proteomes" id="UP000001414">
    <property type="component" value="Chromosome"/>
</dbReference>
<dbReference type="GO" id="GO:0005737">
    <property type="term" value="C:cytoplasm"/>
    <property type="evidence" value="ECO:0007669"/>
    <property type="project" value="UniProtKB-SubCell"/>
</dbReference>
<dbReference type="GO" id="GO:0005524">
    <property type="term" value="F:ATP binding"/>
    <property type="evidence" value="ECO:0007669"/>
    <property type="project" value="UniProtKB-KW"/>
</dbReference>
<dbReference type="GO" id="GO:0004635">
    <property type="term" value="F:phosphoribosyl-AMP cyclohydrolase activity"/>
    <property type="evidence" value="ECO:0007669"/>
    <property type="project" value="UniProtKB-UniRule"/>
</dbReference>
<dbReference type="GO" id="GO:0004636">
    <property type="term" value="F:phosphoribosyl-ATP diphosphatase activity"/>
    <property type="evidence" value="ECO:0007669"/>
    <property type="project" value="UniProtKB-UniRule"/>
</dbReference>
<dbReference type="GO" id="GO:0000105">
    <property type="term" value="P:L-histidine biosynthetic process"/>
    <property type="evidence" value="ECO:0007669"/>
    <property type="project" value="UniProtKB-UniRule"/>
</dbReference>
<dbReference type="CDD" id="cd11534">
    <property type="entry name" value="NTP-PPase_HisIE_like"/>
    <property type="match status" value="1"/>
</dbReference>
<dbReference type="FunFam" id="1.10.287.1080:FF:000002">
    <property type="entry name" value="Histidine biosynthesis bifunctional protein HisIE"/>
    <property type="match status" value="1"/>
</dbReference>
<dbReference type="FunFam" id="3.10.20.810:FF:000001">
    <property type="entry name" value="Histidine biosynthesis bifunctional protein HisIE"/>
    <property type="match status" value="1"/>
</dbReference>
<dbReference type="Gene3D" id="1.10.287.1080">
    <property type="entry name" value="MazG-like"/>
    <property type="match status" value="1"/>
</dbReference>
<dbReference type="Gene3D" id="3.10.20.810">
    <property type="entry name" value="Phosphoribosyl-AMP cyclohydrolase"/>
    <property type="match status" value="1"/>
</dbReference>
<dbReference type="HAMAP" id="MF_01020">
    <property type="entry name" value="HisE"/>
    <property type="match status" value="1"/>
</dbReference>
<dbReference type="HAMAP" id="MF_01019">
    <property type="entry name" value="HisIE"/>
    <property type="match status" value="1"/>
</dbReference>
<dbReference type="InterPro" id="IPR023019">
    <property type="entry name" value="His_synth_HisIE"/>
</dbReference>
<dbReference type="InterPro" id="IPR008179">
    <property type="entry name" value="HisE"/>
</dbReference>
<dbReference type="InterPro" id="IPR021130">
    <property type="entry name" value="PRib-ATP_PPHydrolase-like"/>
</dbReference>
<dbReference type="InterPro" id="IPR002496">
    <property type="entry name" value="PRib_AMP_CycHydrolase_dom"/>
</dbReference>
<dbReference type="InterPro" id="IPR038019">
    <property type="entry name" value="PRib_AMP_CycHydrolase_sf"/>
</dbReference>
<dbReference type="NCBIfam" id="TIGR03188">
    <property type="entry name" value="histidine_hisI"/>
    <property type="match status" value="1"/>
</dbReference>
<dbReference type="NCBIfam" id="NF000768">
    <property type="entry name" value="PRK00051.1"/>
    <property type="match status" value="1"/>
</dbReference>
<dbReference type="NCBIfam" id="NF002747">
    <property type="entry name" value="PRK02759.1"/>
    <property type="match status" value="1"/>
</dbReference>
<dbReference type="PANTHER" id="PTHR42945">
    <property type="entry name" value="HISTIDINE BIOSYNTHESIS BIFUNCTIONAL PROTEIN"/>
    <property type="match status" value="1"/>
</dbReference>
<dbReference type="PANTHER" id="PTHR42945:SF9">
    <property type="entry name" value="HISTIDINE BIOSYNTHESIS BIFUNCTIONAL PROTEIN HISIE"/>
    <property type="match status" value="1"/>
</dbReference>
<dbReference type="Pfam" id="PF01502">
    <property type="entry name" value="PRA-CH"/>
    <property type="match status" value="1"/>
</dbReference>
<dbReference type="Pfam" id="PF01503">
    <property type="entry name" value="PRA-PH"/>
    <property type="match status" value="1"/>
</dbReference>
<dbReference type="SUPFAM" id="SSF101386">
    <property type="entry name" value="all-alpha NTP pyrophosphatases"/>
    <property type="match status" value="1"/>
</dbReference>
<dbReference type="SUPFAM" id="SSF141734">
    <property type="entry name" value="HisI-like"/>
    <property type="match status" value="1"/>
</dbReference>
<reference key="1">
    <citation type="journal article" date="2003" name="Science">
        <title>A genomic view of the human-Bacteroides thetaiotaomicron symbiosis.</title>
        <authorList>
            <person name="Xu J."/>
            <person name="Bjursell M.K."/>
            <person name="Himrod J."/>
            <person name="Deng S."/>
            <person name="Carmichael L.K."/>
            <person name="Chiang H.C."/>
            <person name="Hooper L.V."/>
            <person name="Gordon J.I."/>
        </authorList>
    </citation>
    <scope>NUCLEOTIDE SEQUENCE [LARGE SCALE GENOMIC DNA]</scope>
    <source>
        <strain>ATCC 29148 / DSM 2079 / JCM 5827 / CCUG 10774 / NCTC 10582 / VPI-5482 / E50</strain>
    </source>
</reference>
<evidence type="ECO:0000255" key="1">
    <source>
        <dbReference type="HAMAP-Rule" id="MF_01019"/>
    </source>
</evidence>
<name>HIS2_BACTN</name>
<proteinExistence type="inferred from homology"/>
<comment type="catalytic activity">
    <reaction evidence="1">
        <text>1-(5-phospho-beta-D-ribosyl)-ATP + H2O = 1-(5-phospho-beta-D-ribosyl)-5'-AMP + diphosphate + H(+)</text>
        <dbReference type="Rhea" id="RHEA:22828"/>
        <dbReference type="ChEBI" id="CHEBI:15377"/>
        <dbReference type="ChEBI" id="CHEBI:15378"/>
        <dbReference type="ChEBI" id="CHEBI:33019"/>
        <dbReference type="ChEBI" id="CHEBI:59457"/>
        <dbReference type="ChEBI" id="CHEBI:73183"/>
        <dbReference type="EC" id="3.6.1.31"/>
    </reaction>
</comment>
<comment type="catalytic activity">
    <reaction evidence="1">
        <text>1-(5-phospho-beta-D-ribosyl)-5'-AMP + H2O = 1-(5-phospho-beta-D-ribosyl)-5-[(5-phospho-beta-D-ribosylamino)methylideneamino]imidazole-4-carboxamide</text>
        <dbReference type="Rhea" id="RHEA:20049"/>
        <dbReference type="ChEBI" id="CHEBI:15377"/>
        <dbReference type="ChEBI" id="CHEBI:58435"/>
        <dbReference type="ChEBI" id="CHEBI:59457"/>
        <dbReference type="EC" id="3.5.4.19"/>
    </reaction>
</comment>
<comment type="pathway">
    <text evidence="1">Amino-acid biosynthesis; L-histidine biosynthesis; L-histidine from 5-phospho-alpha-D-ribose 1-diphosphate: step 2/9.</text>
</comment>
<comment type="pathway">
    <text evidence="1">Amino-acid biosynthesis; L-histidine biosynthesis; L-histidine from 5-phospho-alpha-D-ribose 1-diphosphate: step 3/9.</text>
</comment>
<comment type="subcellular location">
    <subcellularLocation>
        <location evidence="1">Cytoplasm</location>
    </subcellularLocation>
</comment>
<comment type="similarity">
    <text evidence="1">In the N-terminal section; belongs to the PRA-CH family.</text>
</comment>
<comment type="similarity">
    <text evidence="1">In the C-terminal section; belongs to the PRA-PH family.</text>
</comment>
<accession>Q8A7Z7</accession>
<organism>
    <name type="scientific">Bacteroides thetaiotaomicron (strain ATCC 29148 / DSM 2079 / JCM 5827 / CCUG 10774 / NCTC 10582 / VPI-5482 / E50)</name>
    <dbReference type="NCBI Taxonomy" id="226186"/>
    <lineage>
        <taxon>Bacteria</taxon>
        <taxon>Pseudomonadati</taxon>
        <taxon>Bacteroidota</taxon>
        <taxon>Bacteroidia</taxon>
        <taxon>Bacteroidales</taxon>
        <taxon>Bacteroidaceae</taxon>
        <taxon>Bacteroides</taxon>
    </lineage>
</organism>
<gene>
    <name evidence="1" type="primary">hisI</name>
    <name evidence="1" type="synonym">hisIE</name>
    <name type="ordered locus">BT_1377</name>
</gene>
<feature type="chain" id="PRO_0000136404" description="Histidine biosynthesis bifunctional protein HisIE">
    <location>
        <begin position="1"/>
        <end position="203"/>
    </location>
</feature>
<feature type="region of interest" description="Phosphoribosyl-AMP cyclohydrolase">
    <location>
        <begin position="1"/>
        <end position="108"/>
    </location>
</feature>
<feature type="region of interest" description="Phosphoribosyl-ATP pyrophosphohydrolase">
    <location>
        <begin position="109"/>
        <end position="203"/>
    </location>
</feature>